<gene>
    <name evidence="1" type="primary">gcvP</name>
    <name type="ordered locus">LBJ_2732</name>
</gene>
<dbReference type="EC" id="1.4.4.2" evidence="1"/>
<dbReference type="EMBL" id="CP000350">
    <property type="protein sequence ID" value="ABJ77143.1"/>
    <property type="molecule type" value="Genomic_DNA"/>
</dbReference>
<dbReference type="RefSeq" id="WP_011669375.1">
    <property type="nucleotide sequence ID" value="NC_008510.1"/>
</dbReference>
<dbReference type="SMR" id="Q04PM7"/>
<dbReference type="KEGG" id="lbj:LBJ_2732"/>
<dbReference type="HOGENOM" id="CLU_004620_3_2_12"/>
<dbReference type="Proteomes" id="UP000000656">
    <property type="component" value="Chromosome 1"/>
</dbReference>
<dbReference type="GO" id="GO:0005829">
    <property type="term" value="C:cytosol"/>
    <property type="evidence" value="ECO:0007669"/>
    <property type="project" value="TreeGrafter"/>
</dbReference>
<dbReference type="GO" id="GO:0005960">
    <property type="term" value="C:glycine cleavage complex"/>
    <property type="evidence" value="ECO:0007669"/>
    <property type="project" value="TreeGrafter"/>
</dbReference>
<dbReference type="GO" id="GO:0016594">
    <property type="term" value="F:glycine binding"/>
    <property type="evidence" value="ECO:0007669"/>
    <property type="project" value="TreeGrafter"/>
</dbReference>
<dbReference type="GO" id="GO:0004375">
    <property type="term" value="F:glycine dehydrogenase (decarboxylating) activity"/>
    <property type="evidence" value="ECO:0007669"/>
    <property type="project" value="UniProtKB-EC"/>
</dbReference>
<dbReference type="GO" id="GO:0030170">
    <property type="term" value="F:pyridoxal phosphate binding"/>
    <property type="evidence" value="ECO:0007669"/>
    <property type="project" value="TreeGrafter"/>
</dbReference>
<dbReference type="GO" id="GO:0019464">
    <property type="term" value="P:glycine decarboxylation via glycine cleavage system"/>
    <property type="evidence" value="ECO:0007669"/>
    <property type="project" value="UniProtKB-UniRule"/>
</dbReference>
<dbReference type="CDD" id="cd00613">
    <property type="entry name" value="GDC-P"/>
    <property type="match status" value="2"/>
</dbReference>
<dbReference type="FunFam" id="3.90.1150.10:FF:000025">
    <property type="entry name" value="Glycine cleavage system P protein"/>
    <property type="match status" value="1"/>
</dbReference>
<dbReference type="FunFam" id="3.40.640.10:FF:000005">
    <property type="entry name" value="Glycine dehydrogenase (decarboxylating), mitochondrial"/>
    <property type="match status" value="1"/>
</dbReference>
<dbReference type="FunFam" id="3.90.1150.10:FF:000007">
    <property type="entry name" value="Glycine dehydrogenase (decarboxylating), mitochondrial"/>
    <property type="match status" value="1"/>
</dbReference>
<dbReference type="FunFam" id="3.40.640.10:FF:000007">
    <property type="entry name" value="glycine dehydrogenase (Decarboxylating), mitochondrial"/>
    <property type="match status" value="1"/>
</dbReference>
<dbReference type="Gene3D" id="3.90.1150.10">
    <property type="entry name" value="Aspartate Aminotransferase, domain 1"/>
    <property type="match status" value="2"/>
</dbReference>
<dbReference type="Gene3D" id="3.40.640.10">
    <property type="entry name" value="Type I PLP-dependent aspartate aminotransferase-like (Major domain)"/>
    <property type="match status" value="2"/>
</dbReference>
<dbReference type="HAMAP" id="MF_00711">
    <property type="entry name" value="GcvP"/>
    <property type="match status" value="1"/>
</dbReference>
<dbReference type="InterPro" id="IPR003437">
    <property type="entry name" value="GcvP"/>
</dbReference>
<dbReference type="InterPro" id="IPR049316">
    <property type="entry name" value="GDC-P_C"/>
</dbReference>
<dbReference type="InterPro" id="IPR049315">
    <property type="entry name" value="GDC-P_N"/>
</dbReference>
<dbReference type="InterPro" id="IPR020581">
    <property type="entry name" value="GDC_P"/>
</dbReference>
<dbReference type="InterPro" id="IPR015424">
    <property type="entry name" value="PyrdxlP-dep_Trfase"/>
</dbReference>
<dbReference type="InterPro" id="IPR015421">
    <property type="entry name" value="PyrdxlP-dep_Trfase_major"/>
</dbReference>
<dbReference type="InterPro" id="IPR015422">
    <property type="entry name" value="PyrdxlP-dep_Trfase_small"/>
</dbReference>
<dbReference type="NCBIfam" id="TIGR00461">
    <property type="entry name" value="gcvP"/>
    <property type="match status" value="1"/>
</dbReference>
<dbReference type="NCBIfam" id="NF003346">
    <property type="entry name" value="PRK04366.1"/>
    <property type="match status" value="1"/>
</dbReference>
<dbReference type="PANTHER" id="PTHR11773:SF1">
    <property type="entry name" value="GLYCINE DEHYDROGENASE (DECARBOXYLATING), MITOCHONDRIAL"/>
    <property type="match status" value="1"/>
</dbReference>
<dbReference type="PANTHER" id="PTHR11773">
    <property type="entry name" value="GLYCINE DEHYDROGENASE, DECARBOXYLATING"/>
    <property type="match status" value="1"/>
</dbReference>
<dbReference type="Pfam" id="PF21478">
    <property type="entry name" value="GcvP2_C"/>
    <property type="match status" value="1"/>
</dbReference>
<dbReference type="Pfam" id="PF02347">
    <property type="entry name" value="GDC-P"/>
    <property type="match status" value="2"/>
</dbReference>
<dbReference type="SUPFAM" id="SSF53383">
    <property type="entry name" value="PLP-dependent transferases"/>
    <property type="match status" value="2"/>
</dbReference>
<protein>
    <recommendedName>
        <fullName evidence="1">Glycine dehydrogenase (decarboxylating)</fullName>
        <ecNumber evidence="1">1.4.4.2</ecNumber>
    </recommendedName>
    <alternativeName>
        <fullName evidence="1">Glycine cleavage system P-protein</fullName>
    </alternativeName>
    <alternativeName>
        <fullName evidence="1">Glycine decarboxylase</fullName>
    </alternativeName>
    <alternativeName>
        <fullName evidence="1">Glycine dehydrogenase (aminomethyl-transferring)</fullName>
    </alternativeName>
</protein>
<keyword id="KW-0560">Oxidoreductase</keyword>
<keyword id="KW-0663">Pyridoxal phosphate</keyword>
<sequence length="964" mass="106287">MNSTLQNRNRTNLERVSTDPLDTFPRRHIGPDSQQVDKMLKSLGLSSLEELVDKAVPAGIRLKKEPDLPKASTEHKILQDLKNIASQNQIFRSYIGAGYNACIIPGVIQRNILENPGWYTAYTPYQAEISQGRLEALLNFQTMIIDLTGLEISNASLLDEGTAAAEAMFLAYSIRKNEIAKKFFVSELCHPQTIDVVVTRANPLGIEIVIGNHESVELNEDFFGVLLQYPATDGKIIDYTSFIQRAHNVGAISTVAADLLALTLLKSPGEMGADIAVGSSQRFGLPLGFGGPHAGYFATKDEFKRSMPGRLIGVSKDSQGNPGLRLSLQTREQHIRRDKATSNICTAQVLLAVISSMYAVYHGPEGLKDIATRIHKFTSILADALKSSGFTISNDTFFDTITIQAGAKAKDILNRARSERINLREYKDGRIGIALDETVNSDDIKDLFKIFEVKNTDIEKLFSNSGNISDSFKRSTSYLTHPVFQSFHTETKMLRYIRKLESRDLSLTTSMIPLGSCTMKLNATTEMYPVTWPEFGAIHPFAPSEQTKGYKIIFEQLEKWLCEITGFAGVSLQPNAGSQGEYAGLLAIRRYHESRKETHRNVCLIPISAHGTNPASAAMAGFKVVVVSCDQNGNVDLEDLKIKAEEHKNDLAALMITYPSTHGVFEESVKEICQIVHSRGGQVYMDGANMNAQVGLTSPGEIGADVCHLNLHKTFCIPHGGGGPGVGPIGVAKHLVPFLPGHVLVDNTTGNEHGAVSAAPWGSASIVLISWIYIALMGSEGLTNATRISILNANYIAKRLEKAYPVLYKGKNGFVAHECILDVRPFKKSAEIEVEDVAKRLIDYGFHAPTMSFPVPGTLMIEPTESESLEELDRFCEAMLLIHQEILDVQNGTLDKIDNPLKNSPHTAAMTTSDRWDHLYPKERAAYPAPWSRDHKFWPFVGRVDNVYGDRNLVCSCLPVESYQ</sequence>
<feature type="chain" id="PRO_1000045587" description="Glycine dehydrogenase (decarboxylating)">
    <location>
        <begin position="1"/>
        <end position="964"/>
    </location>
</feature>
<feature type="region of interest" description="Disordered" evidence="2">
    <location>
        <begin position="1"/>
        <end position="25"/>
    </location>
</feature>
<feature type="compositionally biased region" description="Polar residues" evidence="2">
    <location>
        <begin position="1"/>
        <end position="10"/>
    </location>
</feature>
<feature type="modified residue" description="N6-(pyridoxal phosphate)lysine" evidence="1">
    <location>
        <position position="713"/>
    </location>
</feature>
<reference key="1">
    <citation type="journal article" date="2006" name="Proc. Natl. Acad. Sci. U.S.A.">
        <title>Genome reduction in Leptospira borgpetersenii reflects limited transmission potential.</title>
        <authorList>
            <person name="Bulach D.M."/>
            <person name="Zuerner R.L."/>
            <person name="Wilson P."/>
            <person name="Seemann T."/>
            <person name="McGrath A."/>
            <person name="Cullen P.A."/>
            <person name="Davis J."/>
            <person name="Johnson M."/>
            <person name="Kuczek E."/>
            <person name="Alt D.P."/>
            <person name="Peterson-Burch B."/>
            <person name="Coppel R.L."/>
            <person name="Rood J.I."/>
            <person name="Davies J.K."/>
            <person name="Adler B."/>
        </authorList>
    </citation>
    <scope>NUCLEOTIDE SEQUENCE [LARGE SCALE GENOMIC DNA]</scope>
    <source>
        <strain>JB197</strain>
    </source>
</reference>
<evidence type="ECO:0000255" key="1">
    <source>
        <dbReference type="HAMAP-Rule" id="MF_00711"/>
    </source>
</evidence>
<evidence type="ECO:0000256" key="2">
    <source>
        <dbReference type="SAM" id="MobiDB-lite"/>
    </source>
</evidence>
<proteinExistence type="inferred from homology"/>
<name>GCSP_LEPBJ</name>
<comment type="function">
    <text evidence="1">The glycine cleavage system catalyzes the degradation of glycine. The P protein binds the alpha-amino group of glycine through its pyridoxal phosphate cofactor; CO(2) is released and the remaining methylamine moiety is then transferred to the lipoamide cofactor of the H protein.</text>
</comment>
<comment type="catalytic activity">
    <reaction evidence="1">
        <text>N(6)-[(R)-lipoyl]-L-lysyl-[glycine-cleavage complex H protein] + glycine + H(+) = N(6)-[(R)-S(8)-aminomethyldihydrolipoyl]-L-lysyl-[glycine-cleavage complex H protein] + CO2</text>
        <dbReference type="Rhea" id="RHEA:24304"/>
        <dbReference type="Rhea" id="RHEA-COMP:10494"/>
        <dbReference type="Rhea" id="RHEA-COMP:10495"/>
        <dbReference type="ChEBI" id="CHEBI:15378"/>
        <dbReference type="ChEBI" id="CHEBI:16526"/>
        <dbReference type="ChEBI" id="CHEBI:57305"/>
        <dbReference type="ChEBI" id="CHEBI:83099"/>
        <dbReference type="ChEBI" id="CHEBI:83143"/>
        <dbReference type="EC" id="1.4.4.2"/>
    </reaction>
</comment>
<comment type="cofactor">
    <cofactor evidence="1">
        <name>pyridoxal 5'-phosphate</name>
        <dbReference type="ChEBI" id="CHEBI:597326"/>
    </cofactor>
</comment>
<comment type="subunit">
    <text evidence="1">The glycine cleavage system is composed of four proteins: P, T, L and H.</text>
</comment>
<comment type="similarity">
    <text evidence="1">Belongs to the GcvP family.</text>
</comment>
<accession>Q04PM7</accession>
<organism>
    <name type="scientific">Leptospira borgpetersenii serovar Hardjo-bovis (strain JB197)</name>
    <dbReference type="NCBI Taxonomy" id="355277"/>
    <lineage>
        <taxon>Bacteria</taxon>
        <taxon>Pseudomonadati</taxon>
        <taxon>Spirochaetota</taxon>
        <taxon>Spirochaetia</taxon>
        <taxon>Leptospirales</taxon>
        <taxon>Leptospiraceae</taxon>
        <taxon>Leptospira</taxon>
    </lineage>
</organism>